<protein>
    <recommendedName>
        <fullName>Uncharacterized protein ORF2</fullName>
    </recommendedName>
</protein>
<comment type="subcellular location">
    <subcellularLocation>
        <location evidence="2">Host membrane</location>
        <topology evidence="2">Multi-pass membrane protein</topology>
    </subcellularLocation>
</comment>
<comment type="similarity">
    <text evidence="2">Belongs to the plectrovirus ORF2 family.</text>
</comment>
<organismHost>
    <name type="scientific">Spiroplasma melliferum</name>
    <dbReference type="NCBI Taxonomy" id="2134"/>
</organismHost>
<feature type="chain" id="PRO_0000372077" description="Uncharacterized protein ORF2">
    <location>
        <begin position="1"/>
        <end position="337"/>
    </location>
</feature>
<feature type="transmembrane region" description="Helical" evidence="1">
    <location>
        <begin position="4"/>
        <end position="24"/>
    </location>
</feature>
<feature type="transmembrane region" description="Helical" evidence="1">
    <location>
        <begin position="26"/>
        <end position="46"/>
    </location>
</feature>
<sequence>MKKFIFFFKNYCYISGSMLLFSLIDLLLWIISLYCVGLVFWILFALQCVYFVWWLWKNIFYQLNAFRLVNFVWDNPLSVIIGKLGTGKTLLLTYLSQTMKLLTDEIYSNYPLEDDKVKVLTFKNLDFTDRTKPVPPDDSVILFDESYLYIDGTSPHDEKKVHSGKIPWIVLARHFRHRALFTAQREGMIWNNIRQLASGIIIPISLKKPVAKKGFNFFNRFFIMRMGIFQDITDYEIWKTKSVERTAEGKRAKHKSDVGLGIRFFKIIIPLEFANKYDSEWLKFVRDLKNDEIVNEKFYYWSEITKLSVKERLELFDIDILKKNLKPRKEKGNGKDD</sequence>
<evidence type="ECO:0000255" key="1"/>
<evidence type="ECO:0000305" key="2"/>
<reference key="1">
    <citation type="journal article" date="1996" name="Curr. Microbiol.">
        <title>Spiroplasma citri Virus SpV1: Characterization of viral sequences present in the spiroplasmal host chromosome.</title>
        <authorList>
            <person name="Bebear C.M."/>
            <person name="Aullo P."/>
            <person name="Bove J."/>
            <person name="Renaudin J."/>
        </authorList>
    </citation>
    <scope>NUCLEOTIDE SEQUENCE [GENOMIC DNA]</scope>
</reference>
<keyword id="KW-1043">Host membrane</keyword>
<keyword id="KW-0472">Membrane</keyword>
<keyword id="KW-1185">Reference proteome</keyword>
<keyword id="KW-0812">Transmembrane</keyword>
<keyword id="KW-1133">Transmembrane helix</keyword>
<dbReference type="EMBL" id="U28974">
    <property type="protein sequence ID" value="AAA85020.1"/>
    <property type="molecule type" value="Genomic_DNA"/>
</dbReference>
<dbReference type="RefSeq" id="NP_620621.1">
    <property type="nucleotide sequence ID" value="NC_003793.1"/>
</dbReference>
<dbReference type="KEGG" id="vg:944350"/>
<dbReference type="OrthoDB" id="5989at10239"/>
<dbReference type="Proteomes" id="UP000001764">
    <property type="component" value="Genome"/>
</dbReference>
<dbReference type="GO" id="GO:0033644">
    <property type="term" value="C:host cell membrane"/>
    <property type="evidence" value="ECO:0007669"/>
    <property type="project" value="UniProtKB-SubCell"/>
</dbReference>
<dbReference type="GO" id="GO:0016020">
    <property type="term" value="C:membrane"/>
    <property type="evidence" value="ECO:0007669"/>
    <property type="project" value="UniProtKB-KW"/>
</dbReference>
<dbReference type="Gene3D" id="3.40.50.300">
    <property type="entry name" value="P-loop containing nucleotide triphosphate hydrolases"/>
    <property type="match status" value="1"/>
</dbReference>
<dbReference type="InterPro" id="IPR027417">
    <property type="entry name" value="P-loop_NTPase"/>
</dbReference>
<proteinExistence type="inferred from homology"/>
<gene>
    <name type="ORF">ORF2</name>
</gene>
<name>ORF2_SPV1C</name>
<organism>
    <name type="scientific">Spiroplasma virus SpV1-C74</name>
    <name type="common">SpV1</name>
    <dbReference type="NCBI Taxonomy" id="185959"/>
    <lineage>
        <taxon>Viruses</taxon>
        <taxon>Monodnaviria</taxon>
        <taxon>Loebvirae</taxon>
        <taxon>Hofneiviricota</taxon>
        <taxon>Faserviricetes</taxon>
        <taxon>Tubulavirales</taxon>
        <taxon>Plectroviridae</taxon>
        <taxon>Vespertiliovirus</taxon>
        <taxon>Vespertiliovirus C74</taxon>
    </lineage>
</organism>
<accession>Q88427</accession>